<organism>
    <name type="scientific">Yersinia pestis bv. Antiqua (strain Nepal516)</name>
    <dbReference type="NCBI Taxonomy" id="377628"/>
    <lineage>
        <taxon>Bacteria</taxon>
        <taxon>Pseudomonadati</taxon>
        <taxon>Pseudomonadota</taxon>
        <taxon>Gammaproteobacteria</taxon>
        <taxon>Enterobacterales</taxon>
        <taxon>Yersiniaceae</taxon>
        <taxon>Yersinia</taxon>
    </lineage>
</organism>
<name>GPMA_YERPN</name>
<keyword id="KW-0312">Gluconeogenesis</keyword>
<keyword id="KW-0324">Glycolysis</keyword>
<keyword id="KW-0413">Isomerase</keyword>
<gene>
    <name evidence="1" type="primary">gpmA</name>
    <name type="ordered locus">YPN_2867</name>
    <name type="ORF">YP516_3242</name>
</gene>
<protein>
    <recommendedName>
        <fullName evidence="1">2,3-bisphosphoglycerate-dependent phosphoglycerate mutase</fullName>
        <shortName evidence="1">BPG-dependent PGAM</shortName>
        <shortName evidence="1">PGAM</shortName>
        <shortName evidence="1">Phosphoglyceromutase</shortName>
        <shortName evidence="1">dPGM</shortName>
        <ecNumber evidence="1">5.4.2.11</ecNumber>
    </recommendedName>
</protein>
<evidence type="ECO:0000255" key="1">
    <source>
        <dbReference type="HAMAP-Rule" id="MF_01039"/>
    </source>
</evidence>
<feature type="chain" id="PRO_1000064117" description="2,3-bisphosphoglycerate-dependent phosphoglycerate mutase">
    <location>
        <begin position="1"/>
        <end position="250"/>
    </location>
</feature>
<feature type="active site" description="Tele-phosphohistidine intermediate" evidence="1">
    <location>
        <position position="11"/>
    </location>
</feature>
<feature type="active site" description="Proton donor/acceptor" evidence="1">
    <location>
        <position position="89"/>
    </location>
</feature>
<feature type="binding site" evidence="1">
    <location>
        <begin position="10"/>
        <end position="17"/>
    </location>
    <ligand>
        <name>substrate</name>
    </ligand>
</feature>
<feature type="binding site" evidence="1">
    <location>
        <begin position="23"/>
        <end position="24"/>
    </location>
    <ligand>
        <name>substrate</name>
    </ligand>
</feature>
<feature type="binding site" evidence="1">
    <location>
        <position position="62"/>
    </location>
    <ligand>
        <name>substrate</name>
    </ligand>
</feature>
<feature type="binding site" evidence="1">
    <location>
        <begin position="89"/>
        <end position="92"/>
    </location>
    <ligand>
        <name>substrate</name>
    </ligand>
</feature>
<feature type="binding site" evidence="1">
    <location>
        <position position="100"/>
    </location>
    <ligand>
        <name>substrate</name>
    </ligand>
</feature>
<feature type="binding site" evidence="1">
    <location>
        <begin position="116"/>
        <end position="117"/>
    </location>
    <ligand>
        <name>substrate</name>
    </ligand>
</feature>
<feature type="binding site" evidence="1">
    <location>
        <begin position="185"/>
        <end position="186"/>
    </location>
    <ligand>
        <name>substrate</name>
    </ligand>
</feature>
<feature type="site" description="Transition state stabilizer" evidence="1">
    <location>
        <position position="184"/>
    </location>
</feature>
<dbReference type="EC" id="5.4.2.11" evidence="1"/>
<dbReference type="EMBL" id="CP000305">
    <property type="protein sequence ID" value="ABG19194.1"/>
    <property type="molecule type" value="Genomic_DNA"/>
</dbReference>
<dbReference type="EMBL" id="ACNQ01000017">
    <property type="protein sequence ID" value="EEO75340.1"/>
    <property type="molecule type" value="Genomic_DNA"/>
</dbReference>
<dbReference type="RefSeq" id="WP_002210746.1">
    <property type="nucleotide sequence ID" value="NZ_ACNQ01000017.1"/>
</dbReference>
<dbReference type="SMR" id="Q1CFN6"/>
<dbReference type="GeneID" id="57977273"/>
<dbReference type="KEGG" id="ypn:YPN_2867"/>
<dbReference type="HOGENOM" id="CLU_033323_1_1_6"/>
<dbReference type="UniPathway" id="UPA00109">
    <property type="reaction ID" value="UER00186"/>
</dbReference>
<dbReference type="Proteomes" id="UP000008936">
    <property type="component" value="Chromosome"/>
</dbReference>
<dbReference type="GO" id="GO:0004619">
    <property type="term" value="F:phosphoglycerate mutase activity"/>
    <property type="evidence" value="ECO:0007669"/>
    <property type="project" value="UniProtKB-EC"/>
</dbReference>
<dbReference type="GO" id="GO:0006094">
    <property type="term" value="P:gluconeogenesis"/>
    <property type="evidence" value="ECO:0007669"/>
    <property type="project" value="UniProtKB-UniRule"/>
</dbReference>
<dbReference type="GO" id="GO:0006096">
    <property type="term" value="P:glycolytic process"/>
    <property type="evidence" value="ECO:0007669"/>
    <property type="project" value="UniProtKB-UniRule"/>
</dbReference>
<dbReference type="CDD" id="cd07067">
    <property type="entry name" value="HP_PGM_like"/>
    <property type="match status" value="1"/>
</dbReference>
<dbReference type="FunFam" id="3.40.50.1240:FF:000003">
    <property type="entry name" value="2,3-bisphosphoglycerate-dependent phosphoglycerate mutase"/>
    <property type="match status" value="1"/>
</dbReference>
<dbReference type="Gene3D" id="3.40.50.1240">
    <property type="entry name" value="Phosphoglycerate mutase-like"/>
    <property type="match status" value="1"/>
</dbReference>
<dbReference type="HAMAP" id="MF_01039">
    <property type="entry name" value="PGAM_GpmA"/>
    <property type="match status" value="1"/>
</dbReference>
<dbReference type="InterPro" id="IPR013078">
    <property type="entry name" value="His_Pase_superF_clade-1"/>
</dbReference>
<dbReference type="InterPro" id="IPR029033">
    <property type="entry name" value="His_PPase_superfam"/>
</dbReference>
<dbReference type="InterPro" id="IPR001345">
    <property type="entry name" value="PG/BPGM_mutase_AS"/>
</dbReference>
<dbReference type="InterPro" id="IPR005952">
    <property type="entry name" value="Phosphogly_mut1"/>
</dbReference>
<dbReference type="NCBIfam" id="TIGR01258">
    <property type="entry name" value="pgm_1"/>
    <property type="match status" value="1"/>
</dbReference>
<dbReference type="NCBIfam" id="NF010713">
    <property type="entry name" value="PRK14115.1"/>
    <property type="match status" value="1"/>
</dbReference>
<dbReference type="PANTHER" id="PTHR11931">
    <property type="entry name" value="PHOSPHOGLYCERATE MUTASE"/>
    <property type="match status" value="1"/>
</dbReference>
<dbReference type="Pfam" id="PF00300">
    <property type="entry name" value="His_Phos_1"/>
    <property type="match status" value="1"/>
</dbReference>
<dbReference type="PIRSF" id="PIRSF000709">
    <property type="entry name" value="6PFK_2-Ptase"/>
    <property type="match status" value="1"/>
</dbReference>
<dbReference type="SMART" id="SM00855">
    <property type="entry name" value="PGAM"/>
    <property type="match status" value="1"/>
</dbReference>
<dbReference type="SUPFAM" id="SSF53254">
    <property type="entry name" value="Phosphoglycerate mutase-like"/>
    <property type="match status" value="1"/>
</dbReference>
<dbReference type="PROSITE" id="PS00175">
    <property type="entry name" value="PG_MUTASE"/>
    <property type="match status" value="1"/>
</dbReference>
<reference key="1">
    <citation type="journal article" date="2006" name="J. Bacteriol.">
        <title>Complete genome sequence of Yersinia pestis strains Antiqua and Nepal516: evidence of gene reduction in an emerging pathogen.</title>
        <authorList>
            <person name="Chain P.S.G."/>
            <person name="Hu P."/>
            <person name="Malfatti S.A."/>
            <person name="Radnedge L."/>
            <person name="Larimer F."/>
            <person name="Vergez L.M."/>
            <person name="Worsham P."/>
            <person name="Chu M.C."/>
            <person name="Andersen G.L."/>
        </authorList>
    </citation>
    <scope>NUCLEOTIDE SEQUENCE [LARGE SCALE GENOMIC DNA]</scope>
    <source>
        <strain>Nepal516</strain>
    </source>
</reference>
<reference key="2">
    <citation type="submission" date="2009-04" db="EMBL/GenBank/DDBJ databases">
        <title>Yersinia pestis Nepal516A whole genome shotgun sequencing project.</title>
        <authorList>
            <person name="Plunkett G. III"/>
            <person name="Anderson B.D."/>
            <person name="Baumler D.J."/>
            <person name="Burland V."/>
            <person name="Cabot E.L."/>
            <person name="Glasner J.D."/>
            <person name="Mau B."/>
            <person name="Neeno-Eckwall E."/>
            <person name="Perna N.T."/>
            <person name="Munk A.C."/>
            <person name="Tapia R."/>
            <person name="Green L.D."/>
            <person name="Rogers Y.C."/>
            <person name="Detter J.C."/>
            <person name="Bruce D.C."/>
            <person name="Brettin T.S."/>
        </authorList>
    </citation>
    <scope>NUCLEOTIDE SEQUENCE [LARGE SCALE GENOMIC DNA]</scope>
    <source>
        <strain>Nepal516</strain>
    </source>
</reference>
<comment type="function">
    <text evidence="1">Catalyzes the interconversion of 2-phosphoglycerate and 3-phosphoglycerate.</text>
</comment>
<comment type="catalytic activity">
    <reaction evidence="1">
        <text>(2R)-2-phosphoglycerate = (2R)-3-phosphoglycerate</text>
        <dbReference type="Rhea" id="RHEA:15901"/>
        <dbReference type="ChEBI" id="CHEBI:58272"/>
        <dbReference type="ChEBI" id="CHEBI:58289"/>
        <dbReference type="EC" id="5.4.2.11"/>
    </reaction>
</comment>
<comment type="pathway">
    <text evidence="1">Carbohydrate degradation; glycolysis; pyruvate from D-glyceraldehyde 3-phosphate: step 3/5.</text>
</comment>
<comment type="subunit">
    <text evidence="1">Homodimer.</text>
</comment>
<comment type="similarity">
    <text evidence="1">Belongs to the phosphoglycerate mutase family. BPG-dependent PGAM subfamily.</text>
</comment>
<proteinExistence type="inferred from homology"/>
<accession>Q1CFN6</accession>
<accession>C4GWP0</accession>
<sequence>MAVTKLVLVRHGESQWNNENRFTGWYDVDLSEKGRSEAKAAGKLLKDEGFTFDFAYTSVLKRAIHTLWNILDELDQAWLPTEKTWKLNERHYGALQGLNKSETAEKYGDEQVKQWRRGFAITPPALEKSDERFPGHDPRYAKLTDAELPTTESLALTIERVIPYWNDVIKPRIASGERVIIAAHGNSLRALVKYLDDLGEDEILELNIPTGVPLVYEFDENFKPIKHYYLGNADEIAAKAAAVANQGKAK</sequence>